<feature type="signal peptide" evidence="2">
    <location>
        <begin position="1"/>
        <end position="25"/>
    </location>
</feature>
<feature type="chain" id="PRO_0000039243" description="Fusion glycoprotein F0" evidence="1">
    <location>
        <begin position="26"/>
        <end position="574"/>
    </location>
</feature>
<feature type="chain" id="PRO_0000039244" description="Fusion glycoprotein F2" evidence="1">
    <location>
        <begin position="26"/>
        <end position="109"/>
    </location>
</feature>
<feature type="peptide" id="PRO_0000432672" description="p27" evidence="1">
    <location>
        <begin position="110"/>
        <end position="136"/>
    </location>
</feature>
<feature type="chain" id="PRO_0000039245" description="Fusion glycoprotein F1">
    <location>
        <begin position="137"/>
        <end position="574"/>
    </location>
</feature>
<feature type="topological domain" description="Extracellular" evidence="1">
    <location>
        <begin position="26"/>
        <end position="524"/>
    </location>
</feature>
<feature type="transmembrane region" description="Helical" evidence="1">
    <location>
        <begin position="525"/>
        <end position="550"/>
    </location>
</feature>
<feature type="topological domain" description="Cytoplasmic" evidence="1">
    <location>
        <begin position="551"/>
        <end position="574"/>
    </location>
</feature>
<feature type="region of interest" description="Fusion peptide" evidence="3">
    <location>
        <begin position="137"/>
        <end position="157"/>
    </location>
</feature>
<feature type="coiled-coil region" evidence="1">
    <location>
        <begin position="76"/>
        <end position="96"/>
    </location>
</feature>
<feature type="coiled-coil region" evidence="3">
    <location>
        <begin position="153"/>
        <end position="209"/>
    </location>
</feature>
<feature type="coiled-coil region" evidence="3">
    <location>
        <begin position="481"/>
        <end position="516"/>
    </location>
</feature>
<feature type="site" description="Cleavage; by host furin-like protease" evidence="1">
    <location>
        <begin position="109"/>
        <end position="110"/>
    </location>
</feature>
<feature type="site" description="Cleavage; by host furin-like protease" evidence="1">
    <location>
        <begin position="136"/>
        <end position="137"/>
    </location>
</feature>
<feature type="lipid moiety-binding region" description="S-palmitoyl cysteine; by host" evidence="1">
    <location>
        <position position="550"/>
    </location>
</feature>
<feature type="glycosylation site" description="N-linked (GlcNAc...) asparagine; by host" evidence="1">
    <location>
        <position position="27"/>
    </location>
</feature>
<feature type="glycosylation site" description="N-linked (GlcNAc...) asparagine; by host" evidence="1">
    <location>
        <position position="70"/>
    </location>
</feature>
<feature type="glycosylation site" description="N-linked (GlcNAc...) asparagine; by host" evidence="2">
    <location>
        <position position="116"/>
    </location>
</feature>
<feature type="glycosylation site" description="N-linked (GlcNAc...) asparagine; by host" evidence="2">
    <location>
        <position position="120"/>
    </location>
</feature>
<feature type="glycosylation site" description="N-linked (GlcNAc...) asparagine; by host" evidence="2">
    <location>
        <position position="126"/>
    </location>
</feature>
<feature type="glycosylation site" description="N-linked (GlcNAc...) asparagine; by host" evidence="1">
    <location>
        <position position="500"/>
    </location>
</feature>
<feature type="disulfide bond" description="Interchain (between F2 and F1 chains)" evidence="1">
    <location>
        <begin position="37"/>
        <end position="439"/>
    </location>
</feature>
<feature type="disulfide bond" description="Interchain (between F2 and F1 chains)" evidence="1">
    <location>
        <begin position="69"/>
        <end position="212"/>
    </location>
</feature>
<feature type="disulfide bond" evidence="1">
    <location>
        <begin position="313"/>
        <end position="343"/>
    </location>
</feature>
<feature type="disulfide bond" evidence="1">
    <location>
        <begin position="322"/>
        <end position="333"/>
    </location>
</feature>
<feature type="disulfide bond" evidence="1">
    <location>
        <begin position="358"/>
        <end position="367"/>
    </location>
</feature>
<feature type="disulfide bond" evidence="1">
    <location>
        <begin position="382"/>
        <end position="393"/>
    </location>
</feature>
<feature type="disulfide bond" evidence="1">
    <location>
        <begin position="416"/>
        <end position="422"/>
    </location>
</feature>
<feature type="helix" evidence="5">
    <location>
        <begin position="161"/>
        <end position="164"/>
    </location>
</feature>
<feature type="helix" evidence="5">
    <location>
        <begin position="166"/>
        <end position="201"/>
    </location>
</feature>
<feature type="helix" evidence="5">
    <location>
        <begin position="203"/>
        <end position="208"/>
    </location>
</feature>
<feature type="helix" evidence="5">
    <location>
        <begin position="485"/>
        <end position="513"/>
    </location>
</feature>
<protein>
    <recommendedName>
        <fullName>Fusion glycoprotein F0</fullName>
    </recommendedName>
    <component>
        <recommendedName>
            <fullName evidence="1">Fusion glycoprotein F2</fullName>
            <shortName>F2</shortName>
        </recommendedName>
    </component>
    <component>
        <recommendedName>
            <fullName evidence="1">p27</fullName>
        </recommendedName>
        <alternativeName>
            <fullName>Intervening segment</fullName>
        </alternativeName>
        <alternativeName>
            <fullName>Pep27</fullName>
        </alternativeName>
        <alternativeName>
            <fullName>Peptide 27</fullName>
        </alternativeName>
    </component>
    <component>
        <recommendedName>
            <fullName evidence="1">Fusion glycoprotein F1</fullName>
            <shortName>F1</shortName>
        </recommendedName>
    </component>
</protein>
<gene>
    <name type="primary">F</name>
</gene>
<evidence type="ECO:0000250" key="1">
    <source>
        <dbReference type="UniProtKB" id="P03420"/>
    </source>
</evidence>
<evidence type="ECO:0000255" key="2"/>
<evidence type="ECO:0000269" key="3">
    <source>
    </source>
</evidence>
<evidence type="ECO:0000305" key="4"/>
<evidence type="ECO:0007829" key="5">
    <source>
        <dbReference type="PDB" id="1G2C"/>
    </source>
</evidence>
<reference key="1">
    <citation type="journal article" date="1987" name="J. Gen. Virol.">
        <title>Molecular cloning and sequencing of the F and 22K membrane protein genes of the RSS-2 strain of respiratory syncytial virus.</title>
        <authorList>
            <person name="Baybutt H.N."/>
            <person name="Pringle C.R."/>
        </authorList>
    </citation>
    <scope>NUCLEOTIDE SEQUENCE [GENOMIC RNA]</scope>
</reference>
<reference key="2">
    <citation type="journal article" date="2000" name="Proc. Natl. Acad. Sci. U.S.A.">
        <title>Structural characterization of the human respiratory syncytial virus fusion protein core.</title>
        <authorList>
            <person name="Zhao X."/>
            <person name="Singh M."/>
            <person name="Malashkevich V.N."/>
            <person name="Kim P.S."/>
        </authorList>
    </citation>
    <scope>X-RAY CRYSTALLOGRAPHY (2.3 ANGSTROMS) OF 158-519</scope>
    <scope>COILED COIL</scope>
    <scope>DOMAIN (FUSION GLYCOPROTEIN F0)</scope>
    <scope>DOMAIN (FUSION GLYCOPROTEIN F1)</scope>
</reference>
<accession>P11209</accession>
<dbReference type="EMBL" id="D00151">
    <property type="protein sequence ID" value="BAA00105.1"/>
    <property type="molecule type" value="Genomic_RNA"/>
</dbReference>
<dbReference type="PIR" id="A27494">
    <property type="entry name" value="VGNZR2"/>
</dbReference>
<dbReference type="PDB" id="1G2C">
    <property type="method" value="X-ray"/>
    <property type="resolution" value="2.30 A"/>
    <property type="chains" value="A/C/E/G/I/K/M/O/Q/S/U/W=158-209, B/D/F/H/J/L/N/P/R/T/V/X=477-519"/>
</dbReference>
<dbReference type="PDBsum" id="1G2C"/>
<dbReference type="SMR" id="P11209"/>
<dbReference type="DrugBank" id="DB16258">
    <property type="generic name" value="Nirsevimab"/>
</dbReference>
<dbReference type="GlyCosmos" id="P11209">
    <property type="glycosylation" value="6 sites, No reported glycans"/>
</dbReference>
<dbReference type="EvolutionaryTrace" id="P11209"/>
<dbReference type="GO" id="GO:0044178">
    <property type="term" value="C:host cell Golgi membrane"/>
    <property type="evidence" value="ECO:0007669"/>
    <property type="project" value="UniProtKB-SubCell"/>
</dbReference>
<dbReference type="GO" id="GO:0020002">
    <property type="term" value="C:host cell plasma membrane"/>
    <property type="evidence" value="ECO:0007669"/>
    <property type="project" value="UniProtKB-SubCell"/>
</dbReference>
<dbReference type="GO" id="GO:0016020">
    <property type="term" value="C:membrane"/>
    <property type="evidence" value="ECO:0007669"/>
    <property type="project" value="UniProtKB-KW"/>
</dbReference>
<dbReference type="GO" id="GO:0019031">
    <property type="term" value="C:viral envelope"/>
    <property type="evidence" value="ECO:0007669"/>
    <property type="project" value="UniProtKB-KW"/>
</dbReference>
<dbReference type="GO" id="GO:0055036">
    <property type="term" value="C:virion membrane"/>
    <property type="evidence" value="ECO:0007669"/>
    <property type="project" value="UniProtKB-SubCell"/>
</dbReference>
<dbReference type="GO" id="GO:0098670">
    <property type="term" value="P:entry receptor-mediated virion attachment to host cell"/>
    <property type="evidence" value="ECO:0007669"/>
    <property type="project" value="UniProtKB-KW"/>
</dbReference>
<dbReference type="GO" id="GO:0019064">
    <property type="term" value="P:fusion of virus membrane with host plasma membrane"/>
    <property type="evidence" value="ECO:0007669"/>
    <property type="project" value="UniProtKB-KW"/>
</dbReference>
<dbReference type="GO" id="GO:0046718">
    <property type="term" value="P:symbiont entry into host cell"/>
    <property type="evidence" value="ECO:0007669"/>
    <property type="project" value="UniProtKB-KW"/>
</dbReference>
<dbReference type="GO" id="GO:0060141">
    <property type="term" value="P:symbiont-mediated induction of syncytium formation"/>
    <property type="evidence" value="ECO:0007669"/>
    <property type="project" value="UniProtKB-KW"/>
</dbReference>
<dbReference type="FunFam" id="1.10.287.2480:FF:000001">
    <property type="entry name" value="Fusion glycoprotein F0"/>
    <property type="match status" value="1"/>
</dbReference>
<dbReference type="FunFam" id="1.10.287.2480:FF:000002">
    <property type="entry name" value="Fusion glycoprotein F0"/>
    <property type="match status" value="1"/>
</dbReference>
<dbReference type="Gene3D" id="1.10.287.2480">
    <property type="match status" value="2"/>
</dbReference>
<dbReference type="Gene3D" id="6.10.250.1160">
    <property type="match status" value="1"/>
</dbReference>
<dbReference type="Gene3D" id="6.20.370.50">
    <property type="match status" value="1"/>
</dbReference>
<dbReference type="InterPro" id="IPR000776">
    <property type="entry name" value="Fusion_F0_Paramyxovir"/>
</dbReference>
<dbReference type="Pfam" id="PF00523">
    <property type="entry name" value="Fusion_gly"/>
    <property type="match status" value="1"/>
</dbReference>
<dbReference type="SUPFAM" id="SSF58069">
    <property type="entry name" value="Virus ectodomain"/>
    <property type="match status" value="2"/>
</dbReference>
<keyword id="KW-0002">3D-structure</keyword>
<keyword id="KW-0165">Cleavage on pair of basic residues</keyword>
<keyword id="KW-0175">Coiled coil</keyword>
<keyword id="KW-1015">Disulfide bond</keyword>
<keyword id="KW-1169">Fusion of virus membrane with host cell membrane</keyword>
<keyword id="KW-1168">Fusion of virus membrane with host membrane</keyword>
<keyword id="KW-0325">Glycoprotein</keyword>
<keyword id="KW-1032">Host cell membrane</keyword>
<keyword id="KW-1040">Host Golgi apparatus</keyword>
<keyword id="KW-1043">Host membrane</keyword>
<keyword id="KW-0945">Host-virus interaction</keyword>
<keyword id="KW-0449">Lipoprotein</keyword>
<keyword id="KW-0472">Membrane</keyword>
<keyword id="KW-0564">Palmitate</keyword>
<keyword id="KW-0732">Signal</keyword>
<keyword id="KW-1180">Syncytium formation induced by viral infection</keyword>
<keyword id="KW-0812">Transmembrane</keyword>
<keyword id="KW-1133">Transmembrane helix</keyword>
<keyword id="KW-1161">Viral attachment to host cell</keyword>
<keyword id="KW-1234">Viral attachment to host entry receptor</keyword>
<keyword id="KW-0261">Viral envelope protein</keyword>
<keyword id="KW-1162">Viral penetration into host cytoplasm</keyword>
<keyword id="KW-0946">Virion</keyword>
<keyword id="KW-1160">Virus entry into host cell</keyword>
<proteinExistence type="evidence at protein level"/>
<organism>
    <name type="scientific">Human respiratory syncytial virus A (strain RSS-2)</name>
    <dbReference type="NCBI Taxonomy" id="11261"/>
    <lineage>
        <taxon>Viruses</taxon>
        <taxon>Riboviria</taxon>
        <taxon>Orthornavirae</taxon>
        <taxon>Negarnaviricota</taxon>
        <taxon>Haploviricotina</taxon>
        <taxon>Monjiviricetes</taxon>
        <taxon>Mononegavirales</taxon>
        <taxon>Pneumoviridae</taxon>
        <taxon>Orthopneumovirus</taxon>
        <taxon>Orthopneumovirus hominis</taxon>
    </lineage>
</organism>
<name>FUS_HRSVR</name>
<sequence length="574" mass="63334">MELPILKTNAITAILAAVTLCFASSQNITEEFYQSTCSAVSKGYLSALRTGWYTSVITIELSNIKENKCNGTDAKVKLIKQELDKYKSAVTELQLLMQSTPATNNRARRELPRFMNYTLNNTKNTNVTLSKKRKRRFLGFLLGVGSAIASGIAVSKVLHLEGEVNKIKSALLSTNKAVVSLSNGVSVLTSKVLDLKNYIDKQLLPIVNKQSCSISNIETVIEFQQKNNRLLEITREFSVNAGVTTPVSTYMLTNSELLSLINDMPITNDQKKLMSNNVQIVRQQSYSIMSIIKEEVLAYVVQLPLYGVIDTPCWKLHTSPLCTTNTKEGSNICLTRTDRGWYCDNAGSVSFFPLAETCKVQSNRVFCDTMNSLTLPSEVNLCNIDIFNPKYDCKIMTSKTDVSSSVITSLGAIVSCYGKTKCTASNKDRGIIKTFSNGCDYVSNKGVDTVSVGNTLYYVNKQEGKSLYVKGEPIINFYDPLVFPSDEFDASISQVNEKINQSLAFIRKSDELLHNVNAGKSTTNIMITTIIIVIIVILLSLIAVGLLLYCKARSTPVTLSKDQLSGINNIAFSN</sequence>
<comment type="function">
    <molecule>Fusion glycoprotein F0</molecule>
    <text evidence="1">Inactive precursor that is cleaved at two sites by a furin-like protease to give rise to the mature F1 and F2 fusion glycoproteins.</text>
</comment>
<comment type="function">
    <molecule>Fusion glycoprotein F1</molecule>
    <text evidence="1">Class I viral fusion protein. Under the current model, the protein has at least 3 conformational states: pre-fusion native state, pre-hairpin intermediate state, and post-fusion hairpin state. During viral and plasma cell membrane fusion, the coiled coil regions assume a trimer-of-hairpins structure, positioning the fusion peptide in close proximity to the C-terminal region of the ectodomain. The formation of this structure appears to drive apposition and subsequent fusion of viral and cellular membranes leading to delivery of the nucleocapsid into the cytoplasm. This fusion is pH independent and occurs at the plasma or endosomal membrane. The trimer of F1-F2 (F protein) also facilitates the attachment to host cell by binding to host heparan sulfate. F protein is involved in the entry into the host cell through the interaction with host IGF1R. This interaction activates PRKCZ/PKCzeta that recruits host NCL/nucleolin to the apical cell surface where it can bind fusion glycoprotein F1. Later in infection, F protein expressed at the plasma membrane of infected cells can mediate fusion with adjacent cells to form syncytia, a cytopathic effect that could lead to tissue necrosis. F protein may trigger p53-dependent apoptosis.</text>
</comment>
<comment type="function">
    <molecule>Fusion glycoprotein F2</molecule>
    <text evidence="1">Major determinant of the species specificity of RSV infection. The trimer of F1-F2 (F protein) also facilitates the attachment to host cell by binding to host heparan sulfate. F protein is involved in the entry into the host cell through the interaction with host IGF1R. This interaction activates PRKCZ/PKCzeta that recruits host NCL/nucleolin to the apical cell surface where it can bind fusion glycoprotein F1. Later in infection, F protein expressed at the plasma membrane of infected cells can mediate fusion with adjacent cells to form syncytia, a cytopathic effect that could lead to tissue necrosis. F protein seems to trigger p53-dependent apoptosis.</text>
</comment>
<comment type="subunit">
    <molecule>Fusion glycoprotein F1</molecule>
    <text evidence="1">Homotrimer. Heterodimer with fusion protein F2; disulfide-linked. Interacts with host NCL; this interaction plays a role in viral entry into the host cell. As a heterodimer with F2, interacts with host heparan sulfate. As a heterodimer with F2, interacts with host IGF1R; this interaction activates PRKCZ/PKCzeta that recruits NCL/nucleolin from the host nucleus to the plasma membrane. Part of a complex composed of F1, F2 and G glycoproteins. As a heterodimer with F2, interacts with host RHOA; this interaction facilitates virus-induced syncytium formation.</text>
</comment>
<comment type="subunit">
    <molecule>Fusion glycoprotein F2</molecule>
    <text evidence="1">Homotrimer. Heterodimer with fusion protein F1; disulfide-linked. As a heterodimer with F1, interacts with host heparan sulfate. As a heterodimer with F1, interacts with host IGF1R; this interaction activates PRKCZ/PKCzeta that recruits NCL/nucleolin from the host nucleus to the plasma membrane. Part of a complex composed of F1, F2 and G glycoproteins. As a heterodimer with F1, interacts with host RHOA; this interaction facilitates virus-induced syncytium formation.</text>
</comment>
<comment type="subcellular location">
    <molecule>Fusion glycoprotein F0</molecule>
    <subcellularLocation>
        <location evidence="1">Host Golgi apparatus membrane</location>
        <topology evidence="1">Single-pass membrane protein</topology>
    </subcellularLocation>
</comment>
<comment type="subcellular location">
    <molecule>Fusion glycoprotein F1</molecule>
    <subcellularLocation>
        <location evidence="1">Virion membrane</location>
        <topology evidence="1">Single-pass type I membrane protein</topology>
    </subcellularLocation>
    <subcellularLocation>
        <location evidence="1">Host cell membrane</location>
        <topology evidence="1">Single-pass membrane protein</topology>
    </subcellularLocation>
    <text evidence="1">Localized at the host apical membrane.</text>
</comment>
<comment type="subcellular location">
    <molecule>Fusion glycoprotein F2</molecule>
    <subcellularLocation>
        <location evidence="1">Virion membrane</location>
    </subcellularLocation>
    <subcellularLocation>
        <location evidence="1">Host cell membrane</location>
    </subcellularLocation>
    <text evidence="1">Localized at the host apical membrane.</text>
</comment>
<comment type="domain">
    <molecule>Fusion glycoprotein F0</molecule>
    <text evidence="1 3">The N-terminus is a hydrophobic fusion peptide that inserts into the target host membrane (PubMed:11106388). It is buried in the center of the trimer cavity before cleavage by host furin. The coiled coil (heptad repeat) regions are probably involved in homotrimerization, heterodimerization and in the formation of a fusion-active hairpin structure (By similarity).</text>
</comment>
<comment type="domain">
    <molecule>Fusion glycoprotein F1</molecule>
    <text evidence="1 3">The N-terminus is a hydrophobic fusion peptide that inserts into the target host membrane (PubMed:11106388). It is buried in the center of the trimer cavity before cleavage by host furin. The coiled coil (heptad repeat) regions are probably involved in homotrimerization, heterodimerization and in the formation of a fusion-active hairpin structure (By similarity).</text>
</comment>
<comment type="PTM">
    <molecule>Fusion glycoprotein F0</molecule>
    <text evidence="1">The F glycoprotein is synthesized as a F0 inactive precursor that is heavily N-glycosylated and processed at two sites by a host furin-like protease probably in the Golgi. The cleavage site between p27 and F1 may occur after endocytosis to yield the mature F1 and F2 proteins. Both cleavages are required for membrane fusion and p27 is released from the processed protein.</text>
</comment>
<comment type="similarity">
    <text evidence="4">Belongs to the paramyxoviruses fusion glycoprotein family.</text>
</comment>
<organismHost>
    <name type="scientific">Homo sapiens</name>
    <name type="common">Human</name>
    <dbReference type="NCBI Taxonomy" id="9606"/>
</organismHost>